<feature type="initiator methionine" description="Removed" evidence="1">
    <location>
        <position position="1"/>
    </location>
</feature>
<feature type="chain" id="PRO_0000136752" description="Large ribosomal subunit protein eL8">
    <location>
        <begin position="2"/>
        <end position="266"/>
    </location>
</feature>
<feature type="region of interest" description="Disordered" evidence="3">
    <location>
        <begin position="1"/>
        <end position="28"/>
    </location>
</feature>
<feature type="region of interest" description="Disordered" evidence="3">
    <location>
        <begin position="105"/>
        <end position="134"/>
    </location>
</feature>
<feature type="compositionally biased region" description="Basic residues" evidence="3">
    <location>
        <begin position="1"/>
        <end position="11"/>
    </location>
</feature>
<feature type="compositionally biased region" description="Basic and acidic residues" evidence="3">
    <location>
        <begin position="116"/>
        <end position="130"/>
    </location>
</feature>
<accession>O57592</accession>
<evidence type="ECO:0000250" key="1"/>
<evidence type="ECO:0000250" key="2">
    <source>
        <dbReference type="UniProtKB" id="P62424"/>
    </source>
</evidence>
<evidence type="ECO:0000256" key="3">
    <source>
        <dbReference type="SAM" id="MobiDB-lite"/>
    </source>
</evidence>
<evidence type="ECO:0000305" key="4"/>
<dbReference type="EMBL" id="Y15171">
    <property type="protein sequence ID" value="CAA75444.1"/>
    <property type="molecule type" value="Genomic_DNA"/>
</dbReference>
<dbReference type="PIR" id="T52089">
    <property type="entry name" value="T52089"/>
</dbReference>
<dbReference type="RefSeq" id="XP_003965297.1">
    <property type="nucleotide sequence ID" value="XM_003965248.2"/>
</dbReference>
<dbReference type="SMR" id="O57592"/>
<dbReference type="STRING" id="31033.ENSTRUP00000075237"/>
<dbReference type="GeneID" id="101064977"/>
<dbReference type="KEGG" id="tru:101064977"/>
<dbReference type="CTD" id="6130"/>
<dbReference type="eggNOG" id="KOG3166">
    <property type="taxonomic scope" value="Eukaryota"/>
</dbReference>
<dbReference type="InParanoid" id="O57592"/>
<dbReference type="OrthoDB" id="29563at2759"/>
<dbReference type="Proteomes" id="UP000005226">
    <property type="component" value="Unplaced"/>
</dbReference>
<dbReference type="GO" id="GO:0005737">
    <property type="term" value="C:cytoplasm"/>
    <property type="evidence" value="ECO:0007669"/>
    <property type="project" value="UniProtKB-SubCell"/>
</dbReference>
<dbReference type="GO" id="GO:1990904">
    <property type="term" value="C:ribonucleoprotein complex"/>
    <property type="evidence" value="ECO:0007669"/>
    <property type="project" value="UniProtKB-KW"/>
</dbReference>
<dbReference type="GO" id="GO:0005840">
    <property type="term" value="C:ribosome"/>
    <property type="evidence" value="ECO:0007669"/>
    <property type="project" value="UniProtKB-KW"/>
</dbReference>
<dbReference type="GO" id="GO:0003723">
    <property type="term" value="F:RNA binding"/>
    <property type="evidence" value="ECO:0007669"/>
    <property type="project" value="InterPro"/>
</dbReference>
<dbReference type="GO" id="GO:0042254">
    <property type="term" value="P:ribosome biogenesis"/>
    <property type="evidence" value="ECO:0007669"/>
    <property type="project" value="InterPro"/>
</dbReference>
<dbReference type="FunFam" id="3.30.1330.30:FF:000003">
    <property type="entry name" value="60S ribosomal protein L7a"/>
    <property type="match status" value="1"/>
</dbReference>
<dbReference type="Gene3D" id="3.30.1330.30">
    <property type="match status" value="1"/>
</dbReference>
<dbReference type="InterPro" id="IPR050257">
    <property type="entry name" value="eL8/uL1-like"/>
</dbReference>
<dbReference type="InterPro" id="IPR029064">
    <property type="entry name" value="Ribosomal_eL30-like_sf"/>
</dbReference>
<dbReference type="InterPro" id="IPR004037">
    <property type="entry name" value="Ribosomal_eL8-like_CS"/>
</dbReference>
<dbReference type="InterPro" id="IPR004038">
    <property type="entry name" value="Ribosomal_eL8/eL30/eS12/Gad45"/>
</dbReference>
<dbReference type="InterPro" id="IPR018492">
    <property type="entry name" value="Ribosomal_eL8/Nhp2"/>
</dbReference>
<dbReference type="InterPro" id="IPR001921">
    <property type="entry name" value="Ribosomal_eL8_euk"/>
</dbReference>
<dbReference type="PANTHER" id="PTHR23105">
    <property type="entry name" value="RIBOSOMAL PROTEIN L7AE FAMILY MEMBER"/>
    <property type="match status" value="1"/>
</dbReference>
<dbReference type="Pfam" id="PF01248">
    <property type="entry name" value="Ribosomal_L7Ae"/>
    <property type="match status" value="1"/>
</dbReference>
<dbReference type="PRINTS" id="PR00881">
    <property type="entry name" value="L7ARS6FAMILY"/>
</dbReference>
<dbReference type="PRINTS" id="PR00882">
    <property type="entry name" value="RIBOSOMALL7A"/>
</dbReference>
<dbReference type="SUPFAM" id="SSF55315">
    <property type="entry name" value="L30e-like"/>
    <property type="match status" value="1"/>
</dbReference>
<dbReference type="PROSITE" id="PS01082">
    <property type="entry name" value="RIBOSOMAL_L7AE"/>
    <property type="match status" value="1"/>
</dbReference>
<protein>
    <recommendedName>
        <fullName evidence="4">Large ribosomal subunit protein eL8</fullName>
    </recommendedName>
    <alternativeName>
        <fullName>60S ribosomal protein L7a</fullName>
    </alternativeName>
    <alternativeName>
        <fullName>Surfeit locus protein 3</fullName>
    </alternativeName>
</protein>
<proteinExistence type="inferred from homology"/>
<name>RL7A_TAKRU</name>
<comment type="function">
    <text evidence="2">Component of the large ribosomal subunit. The ribosome is a large ribonucleoprotein complex responsible for the synthesis of proteins in the cell.</text>
</comment>
<comment type="subunit">
    <text evidence="2">Component of the large ribosomal subunit.</text>
</comment>
<comment type="subcellular location">
    <subcellularLocation>
        <location evidence="2">Cytoplasm</location>
    </subcellularLocation>
</comment>
<comment type="similarity">
    <text evidence="4">Belongs to the eukaryotic ribosomal protein eL8 family.</text>
</comment>
<sequence length="266" mass="30001">MPKGKKAKGKKVAPAPSVAKKHEAKKVVNPLFEKRPKNFGIGQDIQPKRDLTRFVKWPRYIRLQRQRSILYKRLKVPPAINQFTQALDRQTATQLFKLAHKYRPETKQEKKKRLLARAEQKAAGKGDAPTKRPPVLRAGVNTITSLVENKKAQLVVIAHDVDPIELVIFLPALCRKMGVPYCIVKGKARLGRLVHRKTCTSVAFTQTNPEDKGALAKLVEAIKTNYNDRYEEIRRHWGGGILGPKSTARINKLEKAKAKELATKLG</sequence>
<organism>
    <name type="scientific">Takifugu rubripes</name>
    <name type="common">Japanese pufferfish</name>
    <name type="synonym">Fugu rubripes</name>
    <dbReference type="NCBI Taxonomy" id="31033"/>
    <lineage>
        <taxon>Eukaryota</taxon>
        <taxon>Metazoa</taxon>
        <taxon>Chordata</taxon>
        <taxon>Craniata</taxon>
        <taxon>Vertebrata</taxon>
        <taxon>Euteleostomi</taxon>
        <taxon>Actinopterygii</taxon>
        <taxon>Neopterygii</taxon>
        <taxon>Teleostei</taxon>
        <taxon>Neoteleostei</taxon>
        <taxon>Acanthomorphata</taxon>
        <taxon>Eupercaria</taxon>
        <taxon>Tetraodontiformes</taxon>
        <taxon>Tetradontoidea</taxon>
        <taxon>Tetraodontidae</taxon>
        <taxon>Takifugu</taxon>
    </lineage>
</organism>
<reference key="1">
    <citation type="journal article" date="1997" name="Genome Res.">
        <title>The comparative genomic structure and sequence of the surfeit gene homologs in the puffer fish Fugu rubripes and their association with CpG-rich islands.</title>
        <authorList>
            <person name="Armes N."/>
            <person name="Gilley J."/>
            <person name="Fried M."/>
        </authorList>
    </citation>
    <scope>NUCLEOTIDE SEQUENCE [GENOMIC DNA]</scope>
</reference>
<keyword id="KW-0963">Cytoplasm</keyword>
<keyword id="KW-1185">Reference proteome</keyword>
<keyword id="KW-0687">Ribonucleoprotein</keyword>
<keyword id="KW-0689">Ribosomal protein</keyword>
<gene>
    <name type="primary">rpl7a</name>
    <name type="synonym">surf3</name>
</gene>